<name>DPO4_CROS8</name>
<keyword id="KW-0963">Cytoplasm</keyword>
<keyword id="KW-0227">DNA damage</keyword>
<keyword id="KW-0234">DNA repair</keyword>
<keyword id="KW-0235">DNA replication</keyword>
<keyword id="KW-0238">DNA-binding</keyword>
<keyword id="KW-0239">DNA-directed DNA polymerase</keyword>
<keyword id="KW-0460">Magnesium</keyword>
<keyword id="KW-0479">Metal-binding</keyword>
<keyword id="KW-0515">Mutator protein</keyword>
<keyword id="KW-0548">Nucleotidyltransferase</keyword>
<keyword id="KW-1185">Reference proteome</keyword>
<keyword id="KW-0808">Transferase</keyword>
<reference key="1">
    <citation type="journal article" date="2010" name="PLoS ONE">
        <title>Genome sequence of Cronobacter sakazakii BAA-894 and comparative genomic hybridization analysis with other Cronobacter species.</title>
        <authorList>
            <person name="Kucerova E."/>
            <person name="Clifton S.W."/>
            <person name="Xia X.Q."/>
            <person name="Long F."/>
            <person name="Porwollik S."/>
            <person name="Fulton L."/>
            <person name="Fronick C."/>
            <person name="Minx P."/>
            <person name="Kyung K."/>
            <person name="Warren W."/>
            <person name="Fulton R."/>
            <person name="Feng D."/>
            <person name="Wollam A."/>
            <person name="Shah N."/>
            <person name="Bhonagiri V."/>
            <person name="Nash W.E."/>
            <person name="Hallsworth-Pepin K."/>
            <person name="Wilson R.K."/>
            <person name="McClelland M."/>
            <person name="Forsythe S.J."/>
        </authorList>
    </citation>
    <scope>NUCLEOTIDE SEQUENCE [LARGE SCALE GENOMIC DNA]</scope>
    <source>
        <strain>ATCC BAA-894</strain>
    </source>
</reference>
<dbReference type="EC" id="2.7.7.7" evidence="1"/>
<dbReference type="EMBL" id="CP000783">
    <property type="protein sequence ID" value="ABU78345.1"/>
    <property type="molecule type" value="Genomic_DNA"/>
</dbReference>
<dbReference type="RefSeq" id="WP_012125687.1">
    <property type="nucleotide sequence ID" value="NC_009778.1"/>
</dbReference>
<dbReference type="SMR" id="A7MEN4"/>
<dbReference type="KEGG" id="esa:ESA_03117"/>
<dbReference type="PATRIC" id="fig|290339.8.peg.2755"/>
<dbReference type="HOGENOM" id="CLU_012348_1_2_6"/>
<dbReference type="Proteomes" id="UP000000260">
    <property type="component" value="Chromosome"/>
</dbReference>
<dbReference type="GO" id="GO:0005829">
    <property type="term" value="C:cytosol"/>
    <property type="evidence" value="ECO:0007669"/>
    <property type="project" value="TreeGrafter"/>
</dbReference>
<dbReference type="GO" id="GO:0003684">
    <property type="term" value="F:damaged DNA binding"/>
    <property type="evidence" value="ECO:0007669"/>
    <property type="project" value="InterPro"/>
</dbReference>
<dbReference type="GO" id="GO:0003887">
    <property type="term" value="F:DNA-directed DNA polymerase activity"/>
    <property type="evidence" value="ECO:0007669"/>
    <property type="project" value="UniProtKB-UniRule"/>
</dbReference>
<dbReference type="GO" id="GO:0000287">
    <property type="term" value="F:magnesium ion binding"/>
    <property type="evidence" value="ECO:0007669"/>
    <property type="project" value="UniProtKB-UniRule"/>
</dbReference>
<dbReference type="GO" id="GO:0006261">
    <property type="term" value="P:DNA-templated DNA replication"/>
    <property type="evidence" value="ECO:0007669"/>
    <property type="project" value="UniProtKB-UniRule"/>
</dbReference>
<dbReference type="GO" id="GO:0042276">
    <property type="term" value="P:error-prone translesion synthesis"/>
    <property type="evidence" value="ECO:0007669"/>
    <property type="project" value="TreeGrafter"/>
</dbReference>
<dbReference type="GO" id="GO:0009432">
    <property type="term" value="P:SOS response"/>
    <property type="evidence" value="ECO:0007669"/>
    <property type="project" value="TreeGrafter"/>
</dbReference>
<dbReference type="CDD" id="cd03586">
    <property type="entry name" value="PolY_Pol_IV_kappa"/>
    <property type="match status" value="1"/>
</dbReference>
<dbReference type="FunFam" id="1.10.150.20:FF:000019">
    <property type="entry name" value="DNA polymerase IV"/>
    <property type="match status" value="1"/>
</dbReference>
<dbReference type="FunFam" id="3.30.1490.100:FF:000002">
    <property type="entry name" value="DNA polymerase IV"/>
    <property type="match status" value="1"/>
</dbReference>
<dbReference type="FunFam" id="3.30.70.270:FF:000002">
    <property type="entry name" value="DNA polymerase IV"/>
    <property type="match status" value="1"/>
</dbReference>
<dbReference type="FunFam" id="3.40.1170.60:FF:000001">
    <property type="entry name" value="DNA polymerase IV"/>
    <property type="match status" value="1"/>
</dbReference>
<dbReference type="Gene3D" id="3.30.70.270">
    <property type="match status" value="1"/>
</dbReference>
<dbReference type="Gene3D" id="3.40.1170.60">
    <property type="match status" value="1"/>
</dbReference>
<dbReference type="Gene3D" id="1.10.150.20">
    <property type="entry name" value="5' to 3' exonuclease, C-terminal subdomain"/>
    <property type="match status" value="1"/>
</dbReference>
<dbReference type="Gene3D" id="3.30.1490.100">
    <property type="entry name" value="DNA polymerase, Y-family, little finger domain"/>
    <property type="match status" value="1"/>
</dbReference>
<dbReference type="HAMAP" id="MF_01113">
    <property type="entry name" value="DNApol_IV"/>
    <property type="match status" value="1"/>
</dbReference>
<dbReference type="InterPro" id="IPR043502">
    <property type="entry name" value="DNA/RNA_pol_sf"/>
</dbReference>
<dbReference type="InterPro" id="IPR036775">
    <property type="entry name" value="DNA_pol_Y-fam_lit_finger_sf"/>
</dbReference>
<dbReference type="InterPro" id="IPR017961">
    <property type="entry name" value="DNA_pol_Y-fam_little_finger"/>
</dbReference>
<dbReference type="InterPro" id="IPR050116">
    <property type="entry name" value="DNA_polymerase-Y"/>
</dbReference>
<dbReference type="InterPro" id="IPR022880">
    <property type="entry name" value="DNApol_IV"/>
</dbReference>
<dbReference type="InterPro" id="IPR053848">
    <property type="entry name" value="IMS_HHH_1"/>
</dbReference>
<dbReference type="InterPro" id="IPR043128">
    <property type="entry name" value="Rev_trsase/Diguanyl_cyclase"/>
</dbReference>
<dbReference type="InterPro" id="IPR001126">
    <property type="entry name" value="UmuC"/>
</dbReference>
<dbReference type="NCBIfam" id="NF002677">
    <property type="entry name" value="PRK02406.1"/>
    <property type="match status" value="1"/>
</dbReference>
<dbReference type="PANTHER" id="PTHR11076:SF33">
    <property type="entry name" value="DNA POLYMERASE KAPPA"/>
    <property type="match status" value="1"/>
</dbReference>
<dbReference type="PANTHER" id="PTHR11076">
    <property type="entry name" value="DNA REPAIR POLYMERASE UMUC / TRANSFERASE FAMILY MEMBER"/>
    <property type="match status" value="1"/>
</dbReference>
<dbReference type="Pfam" id="PF00817">
    <property type="entry name" value="IMS"/>
    <property type="match status" value="1"/>
</dbReference>
<dbReference type="Pfam" id="PF11799">
    <property type="entry name" value="IMS_C"/>
    <property type="match status" value="1"/>
</dbReference>
<dbReference type="Pfam" id="PF21999">
    <property type="entry name" value="IMS_HHH_1"/>
    <property type="match status" value="1"/>
</dbReference>
<dbReference type="SUPFAM" id="SSF56672">
    <property type="entry name" value="DNA/RNA polymerases"/>
    <property type="match status" value="1"/>
</dbReference>
<dbReference type="SUPFAM" id="SSF100879">
    <property type="entry name" value="Lesion bypass DNA polymerase (Y-family), little finger domain"/>
    <property type="match status" value="1"/>
</dbReference>
<dbReference type="PROSITE" id="PS50173">
    <property type="entry name" value="UMUC"/>
    <property type="match status" value="1"/>
</dbReference>
<sequence length="351" mass="39490">MRKIIHVDMDCFFAAVEMRDNPALRDIPLAIGGSRERRGVISTANYPARKYGVRSAMPTAMALKLCPHLTLLPGRFDAYKEASAHIREIFSRYTSLIEPLSLDEAYLDVTHSPHCYGSATLMAKEIRQTIFDELQLTASAGIAPIKFLAKIASDLNKPNGQYVITPEEVPGFLRTLPLGKIPGVGKVTAAKLESLGLRTCEDVQKSDLAALLKRFGKFGRVLWERSQGIDDREISSDRQRKSVGVERTLAEDIHEWAECEAIVELLYPELERRLAAVQPDLRIARQGVKLKFNDFQLTTQEHVWPKLNKEDLLATARKTWEERRSGRGVRLVGLHVTLLDPQIERQLVLGL</sequence>
<comment type="function">
    <text evidence="1">Poorly processive, error-prone DNA polymerase involved in untargeted mutagenesis. Copies undamaged DNA at stalled replication forks, which arise in vivo from mismatched or misaligned primer ends. These misaligned primers can be extended by PolIV. Exhibits no 3'-5' exonuclease (proofreading) activity. May be involved in translesional synthesis, in conjunction with the beta clamp from PolIII.</text>
</comment>
<comment type="catalytic activity">
    <reaction evidence="1">
        <text>DNA(n) + a 2'-deoxyribonucleoside 5'-triphosphate = DNA(n+1) + diphosphate</text>
        <dbReference type="Rhea" id="RHEA:22508"/>
        <dbReference type="Rhea" id="RHEA-COMP:17339"/>
        <dbReference type="Rhea" id="RHEA-COMP:17340"/>
        <dbReference type="ChEBI" id="CHEBI:33019"/>
        <dbReference type="ChEBI" id="CHEBI:61560"/>
        <dbReference type="ChEBI" id="CHEBI:173112"/>
        <dbReference type="EC" id="2.7.7.7"/>
    </reaction>
</comment>
<comment type="cofactor">
    <cofactor evidence="1">
        <name>Mg(2+)</name>
        <dbReference type="ChEBI" id="CHEBI:18420"/>
    </cofactor>
    <text evidence="1">Binds 2 magnesium ions per subunit.</text>
</comment>
<comment type="subunit">
    <text evidence="1">Monomer.</text>
</comment>
<comment type="subcellular location">
    <subcellularLocation>
        <location evidence="1">Cytoplasm</location>
    </subcellularLocation>
</comment>
<comment type="similarity">
    <text evidence="1">Belongs to the DNA polymerase type-Y family.</text>
</comment>
<feature type="chain" id="PRO_1000084895" description="DNA polymerase IV">
    <location>
        <begin position="1"/>
        <end position="351"/>
    </location>
</feature>
<feature type="domain" description="UmuC" evidence="1">
    <location>
        <begin position="4"/>
        <end position="185"/>
    </location>
</feature>
<feature type="active site" evidence="1">
    <location>
        <position position="104"/>
    </location>
</feature>
<feature type="binding site" evidence="1">
    <location>
        <position position="8"/>
    </location>
    <ligand>
        <name>Mg(2+)</name>
        <dbReference type="ChEBI" id="CHEBI:18420"/>
    </ligand>
</feature>
<feature type="binding site" evidence="1">
    <location>
        <position position="103"/>
    </location>
    <ligand>
        <name>Mg(2+)</name>
        <dbReference type="ChEBI" id="CHEBI:18420"/>
    </ligand>
</feature>
<feature type="site" description="Substrate discrimination" evidence="1">
    <location>
        <position position="13"/>
    </location>
</feature>
<gene>
    <name evidence="1" type="primary">dinB</name>
    <name type="ordered locus">ESA_03117</name>
</gene>
<protein>
    <recommendedName>
        <fullName evidence="1">DNA polymerase IV</fullName>
        <shortName evidence="1">Pol IV</shortName>
        <ecNumber evidence="1">2.7.7.7</ecNumber>
    </recommendedName>
</protein>
<accession>A7MEN4</accession>
<organism>
    <name type="scientific">Cronobacter sakazakii (strain ATCC BAA-894)</name>
    <name type="common">Enterobacter sakazakii</name>
    <dbReference type="NCBI Taxonomy" id="290339"/>
    <lineage>
        <taxon>Bacteria</taxon>
        <taxon>Pseudomonadati</taxon>
        <taxon>Pseudomonadota</taxon>
        <taxon>Gammaproteobacteria</taxon>
        <taxon>Enterobacterales</taxon>
        <taxon>Enterobacteriaceae</taxon>
        <taxon>Cronobacter</taxon>
    </lineage>
</organism>
<proteinExistence type="inferred from homology"/>
<evidence type="ECO:0000255" key="1">
    <source>
        <dbReference type="HAMAP-Rule" id="MF_01113"/>
    </source>
</evidence>